<dbReference type="EMBL" id="CP001037">
    <property type="protein sequence ID" value="ACC83322.1"/>
    <property type="molecule type" value="Genomic_DNA"/>
</dbReference>
<dbReference type="RefSeq" id="WP_012411277.1">
    <property type="nucleotide sequence ID" value="NC_010628.1"/>
</dbReference>
<dbReference type="SMR" id="B2J191"/>
<dbReference type="STRING" id="63737.Npun_R4978"/>
<dbReference type="EnsemblBacteria" id="ACC83322">
    <property type="protein sequence ID" value="ACC83322"/>
    <property type="gene ID" value="Npun_R4978"/>
</dbReference>
<dbReference type="KEGG" id="npu:Npun_R4978"/>
<dbReference type="eggNOG" id="COG1281">
    <property type="taxonomic scope" value="Bacteria"/>
</dbReference>
<dbReference type="HOGENOM" id="CLU_054493_1_0_3"/>
<dbReference type="OrthoDB" id="9776534at2"/>
<dbReference type="PhylomeDB" id="B2J191"/>
<dbReference type="Proteomes" id="UP000001191">
    <property type="component" value="Chromosome"/>
</dbReference>
<dbReference type="GO" id="GO:0005737">
    <property type="term" value="C:cytoplasm"/>
    <property type="evidence" value="ECO:0007669"/>
    <property type="project" value="UniProtKB-SubCell"/>
</dbReference>
<dbReference type="GO" id="GO:0044183">
    <property type="term" value="F:protein folding chaperone"/>
    <property type="evidence" value="ECO:0007669"/>
    <property type="project" value="TreeGrafter"/>
</dbReference>
<dbReference type="GO" id="GO:0051082">
    <property type="term" value="F:unfolded protein binding"/>
    <property type="evidence" value="ECO:0007669"/>
    <property type="project" value="UniProtKB-UniRule"/>
</dbReference>
<dbReference type="GO" id="GO:0042026">
    <property type="term" value="P:protein refolding"/>
    <property type="evidence" value="ECO:0007669"/>
    <property type="project" value="TreeGrafter"/>
</dbReference>
<dbReference type="CDD" id="cd00498">
    <property type="entry name" value="Hsp33"/>
    <property type="match status" value="1"/>
</dbReference>
<dbReference type="Gene3D" id="3.55.30.10">
    <property type="entry name" value="Hsp33 domain"/>
    <property type="match status" value="1"/>
</dbReference>
<dbReference type="Gene3D" id="3.90.1280.10">
    <property type="entry name" value="HSP33 redox switch-like"/>
    <property type="match status" value="1"/>
</dbReference>
<dbReference type="HAMAP" id="MF_00117">
    <property type="entry name" value="HslO"/>
    <property type="match status" value="1"/>
</dbReference>
<dbReference type="InterPro" id="IPR000397">
    <property type="entry name" value="Heat_shock_Hsp33"/>
</dbReference>
<dbReference type="InterPro" id="IPR016154">
    <property type="entry name" value="Heat_shock_Hsp33_C"/>
</dbReference>
<dbReference type="InterPro" id="IPR016153">
    <property type="entry name" value="Heat_shock_Hsp33_N"/>
</dbReference>
<dbReference type="NCBIfam" id="NF001033">
    <property type="entry name" value="PRK00114.1"/>
    <property type="match status" value="1"/>
</dbReference>
<dbReference type="PANTHER" id="PTHR30111">
    <property type="entry name" value="33 KDA CHAPERONIN"/>
    <property type="match status" value="1"/>
</dbReference>
<dbReference type="PANTHER" id="PTHR30111:SF1">
    <property type="entry name" value="33 KDA CHAPERONIN"/>
    <property type="match status" value="1"/>
</dbReference>
<dbReference type="Pfam" id="PF01430">
    <property type="entry name" value="HSP33"/>
    <property type="match status" value="1"/>
</dbReference>
<dbReference type="PIRSF" id="PIRSF005261">
    <property type="entry name" value="Heat_shock_Hsp33"/>
    <property type="match status" value="1"/>
</dbReference>
<dbReference type="SUPFAM" id="SSF64397">
    <property type="entry name" value="Hsp33 domain"/>
    <property type="match status" value="1"/>
</dbReference>
<dbReference type="SUPFAM" id="SSF118352">
    <property type="entry name" value="HSP33 redox switch-like"/>
    <property type="match status" value="1"/>
</dbReference>
<reference key="1">
    <citation type="journal article" date="2013" name="Plant Physiol.">
        <title>A Nostoc punctiforme Sugar Transporter Necessary to Establish a Cyanobacterium-Plant Symbiosis.</title>
        <authorList>
            <person name="Ekman M."/>
            <person name="Picossi S."/>
            <person name="Campbell E.L."/>
            <person name="Meeks J.C."/>
            <person name="Flores E."/>
        </authorList>
    </citation>
    <scope>NUCLEOTIDE SEQUENCE [LARGE SCALE GENOMIC DNA]</scope>
    <source>
        <strain>ATCC 29133 / PCC 73102</strain>
    </source>
</reference>
<comment type="function">
    <text evidence="1">Redox regulated molecular chaperone. Protects both thermally unfolding and oxidatively damaged proteins from irreversible aggregation. Plays an important role in the bacterial defense system toward oxidative stress.</text>
</comment>
<comment type="subcellular location">
    <subcellularLocation>
        <location evidence="1">Cytoplasm</location>
    </subcellularLocation>
</comment>
<comment type="PTM">
    <text evidence="1">Under oxidizing conditions two disulfide bonds are formed involving the reactive cysteines. Under reducing conditions zinc is bound to the reactive cysteines and the protein is inactive.</text>
</comment>
<comment type="similarity">
    <text evidence="1">Belongs to the HSP33 family.</text>
</comment>
<sequence>MADQLIRATAAEGGIRAVGVITTRLTEEARQRHKLSYVATAALGRTMAAGLLMASSMKRSGSRVNVRVKGDGPLGGILVDAGLDGTVRGYVGNPSIELPPNAKGKLDVGGAVGGGYLYVVRDVGYGYPYSSTVELVSGEIGDDVAHYLVNSEQTPSALVLGVFVGAGGVTAAGGLLIQVLPKAARDEALVETLESRVAGLAGFTPLLQAGKNLTEIFSDLLGDMGLEIFSERQMLRFHCGCSFDRVLGALKILGEAELQDMIVKDNGAEATCDFCSNVYQASSDQLAQLIADLQAESTVSG</sequence>
<name>HSLO_NOSP7</name>
<keyword id="KW-0143">Chaperone</keyword>
<keyword id="KW-0963">Cytoplasm</keyword>
<keyword id="KW-1015">Disulfide bond</keyword>
<keyword id="KW-0676">Redox-active center</keyword>
<keyword id="KW-1185">Reference proteome</keyword>
<keyword id="KW-0862">Zinc</keyword>
<proteinExistence type="inferred from homology"/>
<accession>B2J191</accession>
<gene>
    <name evidence="1" type="primary">hslO</name>
    <name type="ordered locus">Npun_R4978</name>
</gene>
<protein>
    <recommendedName>
        <fullName evidence="1">33 kDa chaperonin</fullName>
    </recommendedName>
    <alternativeName>
        <fullName evidence="1">Heat shock protein 33 homolog</fullName>
        <shortName evidence="1">HSP33</shortName>
    </alternativeName>
</protein>
<organism>
    <name type="scientific">Nostoc punctiforme (strain ATCC 29133 / PCC 73102)</name>
    <dbReference type="NCBI Taxonomy" id="63737"/>
    <lineage>
        <taxon>Bacteria</taxon>
        <taxon>Bacillati</taxon>
        <taxon>Cyanobacteriota</taxon>
        <taxon>Cyanophyceae</taxon>
        <taxon>Nostocales</taxon>
        <taxon>Nostocaceae</taxon>
        <taxon>Nostoc</taxon>
    </lineage>
</organism>
<evidence type="ECO:0000255" key="1">
    <source>
        <dbReference type="HAMAP-Rule" id="MF_00117"/>
    </source>
</evidence>
<feature type="chain" id="PRO_1000095024" description="33 kDa chaperonin">
    <location>
        <begin position="1"/>
        <end position="301"/>
    </location>
</feature>
<feature type="disulfide bond" description="Redox-active" evidence="1">
    <location>
        <begin position="239"/>
        <end position="241"/>
    </location>
</feature>
<feature type="disulfide bond" description="Redox-active" evidence="1">
    <location>
        <begin position="272"/>
        <end position="275"/>
    </location>
</feature>